<proteinExistence type="inferred from homology"/>
<accession>B6JLE8</accession>
<name>DAPF_HELP2</name>
<dbReference type="EC" id="5.1.1.7" evidence="1"/>
<dbReference type="EMBL" id="CP001217">
    <property type="protein sequence ID" value="ACJ07726.1"/>
    <property type="molecule type" value="Genomic_DNA"/>
</dbReference>
<dbReference type="SMR" id="B6JLE8"/>
<dbReference type="KEGG" id="hpp:HPP12_0572"/>
<dbReference type="HOGENOM" id="CLU_053306_3_2_7"/>
<dbReference type="UniPathway" id="UPA00034">
    <property type="reaction ID" value="UER00025"/>
</dbReference>
<dbReference type="Proteomes" id="UP000008198">
    <property type="component" value="Chromosome"/>
</dbReference>
<dbReference type="GO" id="GO:0005829">
    <property type="term" value="C:cytosol"/>
    <property type="evidence" value="ECO:0007669"/>
    <property type="project" value="TreeGrafter"/>
</dbReference>
<dbReference type="GO" id="GO:0008837">
    <property type="term" value="F:diaminopimelate epimerase activity"/>
    <property type="evidence" value="ECO:0007669"/>
    <property type="project" value="UniProtKB-UniRule"/>
</dbReference>
<dbReference type="GO" id="GO:0009089">
    <property type="term" value="P:lysine biosynthetic process via diaminopimelate"/>
    <property type="evidence" value="ECO:0007669"/>
    <property type="project" value="UniProtKB-UniRule"/>
</dbReference>
<dbReference type="FunFam" id="3.10.310.10:FF:000025">
    <property type="entry name" value="Diaminopimelate epimerase"/>
    <property type="match status" value="1"/>
</dbReference>
<dbReference type="Gene3D" id="3.10.310.10">
    <property type="entry name" value="Diaminopimelate Epimerase, Chain A, domain 1"/>
    <property type="match status" value="2"/>
</dbReference>
<dbReference type="HAMAP" id="MF_00197">
    <property type="entry name" value="DAP_epimerase"/>
    <property type="match status" value="1"/>
</dbReference>
<dbReference type="InterPro" id="IPR018510">
    <property type="entry name" value="DAP_epimerase_AS"/>
</dbReference>
<dbReference type="InterPro" id="IPR001653">
    <property type="entry name" value="DAP_epimerase_DapF"/>
</dbReference>
<dbReference type="NCBIfam" id="TIGR00652">
    <property type="entry name" value="DapF"/>
    <property type="match status" value="1"/>
</dbReference>
<dbReference type="PANTHER" id="PTHR31689:SF0">
    <property type="entry name" value="DIAMINOPIMELATE EPIMERASE"/>
    <property type="match status" value="1"/>
</dbReference>
<dbReference type="PANTHER" id="PTHR31689">
    <property type="entry name" value="DIAMINOPIMELATE EPIMERASE, CHLOROPLASTIC"/>
    <property type="match status" value="1"/>
</dbReference>
<dbReference type="Pfam" id="PF01678">
    <property type="entry name" value="DAP_epimerase"/>
    <property type="match status" value="2"/>
</dbReference>
<dbReference type="SUPFAM" id="SSF54506">
    <property type="entry name" value="Diaminopimelate epimerase-like"/>
    <property type="match status" value="2"/>
</dbReference>
<dbReference type="PROSITE" id="PS01326">
    <property type="entry name" value="DAP_EPIMERASE"/>
    <property type="match status" value="1"/>
</dbReference>
<keyword id="KW-0028">Amino-acid biosynthesis</keyword>
<keyword id="KW-0963">Cytoplasm</keyword>
<keyword id="KW-0413">Isomerase</keyword>
<keyword id="KW-0457">Lysine biosynthesis</keyword>
<organism>
    <name type="scientific">Helicobacter pylori (strain P12)</name>
    <dbReference type="NCBI Taxonomy" id="570508"/>
    <lineage>
        <taxon>Bacteria</taxon>
        <taxon>Pseudomonadati</taxon>
        <taxon>Campylobacterota</taxon>
        <taxon>Epsilonproteobacteria</taxon>
        <taxon>Campylobacterales</taxon>
        <taxon>Helicobacteraceae</taxon>
        <taxon>Helicobacter</taxon>
    </lineage>
</organism>
<feature type="chain" id="PRO_1000099239" description="Diaminopimelate epimerase">
    <location>
        <begin position="1"/>
        <end position="272"/>
    </location>
</feature>
<feature type="active site" description="Proton donor" evidence="1">
    <location>
        <position position="69"/>
    </location>
</feature>
<feature type="active site" description="Proton acceptor" evidence="1">
    <location>
        <position position="209"/>
    </location>
</feature>
<feature type="binding site" evidence="1">
    <location>
        <position position="11"/>
    </location>
    <ligand>
        <name>substrate</name>
    </ligand>
</feature>
<feature type="binding site" evidence="1">
    <location>
        <position position="60"/>
    </location>
    <ligand>
        <name>substrate</name>
    </ligand>
</feature>
<feature type="binding site" evidence="1">
    <location>
        <begin position="70"/>
        <end position="71"/>
    </location>
    <ligand>
        <name>substrate</name>
    </ligand>
</feature>
<feature type="binding site" evidence="1">
    <location>
        <position position="181"/>
    </location>
    <ligand>
        <name>substrate</name>
    </ligand>
</feature>
<feature type="binding site" evidence="1">
    <location>
        <begin position="199"/>
        <end position="200"/>
    </location>
    <ligand>
        <name>substrate</name>
    </ligand>
</feature>
<feature type="binding site" evidence="1">
    <location>
        <begin position="210"/>
        <end position="211"/>
    </location>
    <ligand>
        <name>substrate</name>
    </ligand>
</feature>
<feature type="site" description="Could be important to modulate the pK values of the two catalytic cysteine residues" evidence="1">
    <location>
        <position position="152"/>
    </location>
</feature>
<feature type="site" description="Could be important to modulate the pK values of the two catalytic cysteine residues" evidence="1">
    <location>
        <position position="199"/>
    </location>
</feature>
<sequence length="272" mass="30589">MVFYKYSGSGNDFLITQSFKKKDFSNLAKQVCHRHEGFGADGLVIVLPSKDYDYEWDFYNSDGSKAGMCGNASRCVGLFAYQHAIAPKEHVFLAGKREISICIEEPNIIESNLGNYKILDTIPNLRCKKFFTNNSVLENILTFYLIDTGVPHLVGFVKNKEWLNSLNTLELRALRHAFNANINIAFIENEETIFLQTYERGVEDFTLACGTGMAAVFIAARLFYNAPKKATLIPKSNESLELSLKNDGIFYKGIVRYIGMSVLGSVFENGCF</sequence>
<gene>
    <name evidence="1" type="primary">dapF</name>
    <name type="ordered locus">HPP12_0572</name>
</gene>
<reference key="1">
    <citation type="submission" date="2008-10" db="EMBL/GenBank/DDBJ databases">
        <title>The complete genome sequence of Helicobacter pylori strain P12.</title>
        <authorList>
            <person name="Fischer W."/>
            <person name="Windhager L."/>
            <person name="Karnholz A."/>
            <person name="Zeiller M."/>
            <person name="Zimmer R."/>
            <person name="Haas R."/>
        </authorList>
    </citation>
    <scope>NUCLEOTIDE SEQUENCE [LARGE SCALE GENOMIC DNA]</scope>
    <source>
        <strain>P12</strain>
    </source>
</reference>
<evidence type="ECO:0000255" key="1">
    <source>
        <dbReference type="HAMAP-Rule" id="MF_00197"/>
    </source>
</evidence>
<comment type="function">
    <text evidence="1">Catalyzes the stereoinversion of LL-2,6-diaminopimelate (L,L-DAP) to meso-diaminopimelate (meso-DAP), a precursor of L-lysine and an essential component of the bacterial peptidoglycan.</text>
</comment>
<comment type="catalytic activity">
    <reaction evidence="1">
        <text>(2S,6S)-2,6-diaminopimelate = meso-2,6-diaminopimelate</text>
        <dbReference type="Rhea" id="RHEA:15393"/>
        <dbReference type="ChEBI" id="CHEBI:57609"/>
        <dbReference type="ChEBI" id="CHEBI:57791"/>
        <dbReference type="EC" id="5.1.1.7"/>
    </reaction>
</comment>
<comment type="pathway">
    <text evidence="1">Amino-acid biosynthesis; L-lysine biosynthesis via DAP pathway; DL-2,6-diaminopimelate from LL-2,6-diaminopimelate: step 1/1.</text>
</comment>
<comment type="subunit">
    <text evidence="1">Homodimer.</text>
</comment>
<comment type="subcellular location">
    <subcellularLocation>
        <location evidence="1">Cytoplasm</location>
    </subcellularLocation>
</comment>
<comment type="similarity">
    <text evidence="1">Belongs to the diaminopimelate epimerase family.</text>
</comment>
<protein>
    <recommendedName>
        <fullName evidence="1">Diaminopimelate epimerase</fullName>
        <shortName evidence="1">DAP epimerase</shortName>
        <ecNumber evidence="1">5.1.1.7</ecNumber>
    </recommendedName>
    <alternativeName>
        <fullName evidence="1">PLP-independent amino acid racemase</fullName>
    </alternativeName>
</protein>